<comment type="function">
    <text evidence="1">Ubiquitin-like modifier involved in autophagosome formation. With atg4, mediates the delivery of the autophagosomes to the vacuole via the microtubule cytoskeleton. Required for selective autophagic degradation of the nucleus (nucleophagy) as well as for mitophagy which contributes to regulate mitochondrial quantity and quality by eliminating the mitochondria to a basal level to fulfill cellular energy requirements and preventing excess ROS production. Participates also in membrane fusion events that take place in the early secretory pathway. Also involved in endoplasmic reticulum-specific autophagic process and is essential for the survival of cells subjected to severe ER stress. The atg8-PE conjugate mediates tethering between adjacent membranes and stimulates membrane hemifusion, leading to expansion of the autophagosomal membrane during autophagy.</text>
</comment>
<comment type="subcellular location">
    <subcellularLocation>
        <location evidence="1">Cytoplasmic vesicle</location>
        <location evidence="1">Autophagosome membrane</location>
        <topology evidence="1">Lipid-anchor</topology>
    </subcellularLocation>
    <subcellularLocation>
        <location evidence="1">Vacuole membrane</location>
        <topology evidence="1">Lipid-anchor</topology>
    </subcellularLocation>
</comment>
<comment type="PTM">
    <text evidence="1">The C-terminal 7 residues are removed by atg4 to expose Gly-116 at the C-terminus. The c-terminal Gly is then amidated with phosphatidylethanolamine by an activating system similar to that for ubiquitin.</text>
</comment>
<comment type="similarity">
    <text evidence="2">Belongs to the ATG8 family.</text>
</comment>
<keyword id="KW-0072">Autophagy</keyword>
<keyword id="KW-0968">Cytoplasmic vesicle</keyword>
<keyword id="KW-0449">Lipoprotein</keyword>
<keyword id="KW-0472">Membrane</keyword>
<keyword id="KW-0653">Protein transport</keyword>
<keyword id="KW-1185">Reference proteome</keyword>
<keyword id="KW-0813">Transport</keyword>
<keyword id="KW-0833">Ubl conjugation pathway</keyword>
<keyword id="KW-0926">Vacuole</keyword>
<dbReference type="EMBL" id="CH476622">
    <property type="protein sequence ID" value="EDN96676.1"/>
    <property type="molecule type" value="Genomic_DNA"/>
</dbReference>
<dbReference type="RefSeq" id="XP_001597408.1">
    <property type="nucleotide sequence ID" value="XM_001597358.1"/>
</dbReference>
<dbReference type="SMR" id="A7E8H4"/>
<dbReference type="FunCoup" id="A7E8H4">
    <property type="interactions" value="515"/>
</dbReference>
<dbReference type="STRING" id="665079.A7E8H4"/>
<dbReference type="EnsemblFungi" id="EDN96676">
    <property type="protein sequence ID" value="EDN96676"/>
    <property type="gene ID" value="SS1G_01602"/>
</dbReference>
<dbReference type="GeneID" id="5493212"/>
<dbReference type="KEGG" id="ssl:SS1G_01602"/>
<dbReference type="VEuPathDB" id="FungiDB:sscle_01g007550"/>
<dbReference type="eggNOG" id="KOG1654">
    <property type="taxonomic scope" value="Eukaryota"/>
</dbReference>
<dbReference type="HOGENOM" id="CLU_119276_0_1_1"/>
<dbReference type="InParanoid" id="A7E8H4"/>
<dbReference type="OMA" id="AVYQEHK"/>
<dbReference type="OrthoDB" id="6738456at2759"/>
<dbReference type="Proteomes" id="UP000001312">
    <property type="component" value="Unassembled WGS sequence"/>
</dbReference>
<dbReference type="GO" id="GO:0000421">
    <property type="term" value="C:autophagosome membrane"/>
    <property type="evidence" value="ECO:0000318"/>
    <property type="project" value="GO_Central"/>
</dbReference>
<dbReference type="GO" id="GO:0031410">
    <property type="term" value="C:cytoplasmic vesicle"/>
    <property type="evidence" value="ECO:0007669"/>
    <property type="project" value="UniProtKB-KW"/>
</dbReference>
<dbReference type="GO" id="GO:0000329">
    <property type="term" value="C:fungal-type vacuole membrane"/>
    <property type="evidence" value="ECO:0000318"/>
    <property type="project" value="GO_Central"/>
</dbReference>
<dbReference type="GO" id="GO:0008429">
    <property type="term" value="F:phosphatidylethanolamine binding"/>
    <property type="evidence" value="ECO:0000318"/>
    <property type="project" value="GO_Central"/>
</dbReference>
<dbReference type="GO" id="GO:0000045">
    <property type="term" value="P:autophagosome assembly"/>
    <property type="evidence" value="ECO:0000318"/>
    <property type="project" value="GO_Central"/>
</dbReference>
<dbReference type="GO" id="GO:0097352">
    <property type="term" value="P:autophagosome maturation"/>
    <property type="evidence" value="ECO:0000318"/>
    <property type="project" value="GO_Central"/>
</dbReference>
<dbReference type="GO" id="GO:0006995">
    <property type="term" value="P:cellular response to nitrogen starvation"/>
    <property type="evidence" value="ECO:0000318"/>
    <property type="project" value="GO_Central"/>
</dbReference>
<dbReference type="GO" id="GO:0000423">
    <property type="term" value="P:mitophagy"/>
    <property type="evidence" value="ECO:0000318"/>
    <property type="project" value="GO_Central"/>
</dbReference>
<dbReference type="GO" id="GO:0015031">
    <property type="term" value="P:protein transport"/>
    <property type="evidence" value="ECO:0007669"/>
    <property type="project" value="UniProtKB-KW"/>
</dbReference>
<dbReference type="CDD" id="cd16128">
    <property type="entry name" value="Ubl_ATG8"/>
    <property type="match status" value="1"/>
</dbReference>
<dbReference type="FunFam" id="3.10.20.90:FF:000010">
    <property type="entry name" value="Autophagy-related protein"/>
    <property type="match status" value="1"/>
</dbReference>
<dbReference type="Gene3D" id="3.10.20.90">
    <property type="entry name" value="Phosphatidylinositol 3-kinase Catalytic Subunit, Chain A, domain 1"/>
    <property type="match status" value="1"/>
</dbReference>
<dbReference type="InterPro" id="IPR004241">
    <property type="entry name" value="Atg8-like"/>
</dbReference>
<dbReference type="InterPro" id="IPR029071">
    <property type="entry name" value="Ubiquitin-like_domsf"/>
</dbReference>
<dbReference type="PANTHER" id="PTHR10969">
    <property type="entry name" value="MICROTUBULE-ASSOCIATED PROTEINS 1A/1B LIGHT CHAIN 3-RELATED"/>
    <property type="match status" value="1"/>
</dbReference>
<dbReference type="Pfam" id="PF02991">
    <property type="entry name" value="ATG8"/>
    <property type="match status" value="1"/>
</dbReference>
<dbReference type="SUPFAM" id="SSF54236">
    <property type="entry name" value="Ubiquitin-like"/>
    <property type="match status" value="1"/>
</dbReference>
<organism>
    <name type="scientific">Sclerotinia sclerotiorum (strain ATCC 18683 / 1980 / Ss-1)</name>
    <name type="common">White mold</name>
    <name type="synonym">Whetzelinia sclerotiorum</name>
    <dbReference type="NCBI Taxonomy" id="665079"/>
    <lineage>
        <taxon>Eukaryota</taxon>
        <taxon>Fungi</taxon>
        <taxon>Dikarya</taxon>
        <taxon>Ascomycota</taxon>
        <taxon>Pezizomycotina</taxon>
        <taxon>Leotiomycetes</taxon>
        <taxon>Helotiales</taxon>
        <taxon>Sclerotiniaceae</taxon>
        <taxon>Sclerotinia</taxon>
    </lineage>
</organism>
<gene>
    <name type="primary">atg8</name>
    <name type="ORF">SS1G_01602</name>
</gene>
<proteinExistence type="inferred from homology"/>
<accession>A7E8H4</accession>
<evidence type="ECO:0000250" key="1">
    <source>
        <dbReference type="UniProtKB" id="P38182"/>
    </source>
</evidence>
<evidence type="ECO:0000305" key="2"/>
<name>ATG8_SCLS1</name>
<feature type="chain" id="PRO_0000317900" description="Autophagy-related protein 8">
    <location>
        <begin position="1"/>
        <end position="116"/>
    </location>
</feature>
<feature type="propeptide" id="PRO_0000317901" description="Removed in mature form" evidence="1">
    <location>
        <begin position="117"/>
        <end position="123"/>
    </location>
</feature>
<feature type="site" description="Cleavage; by atg4" evidence="1">
    <location>
        <begin position="116"/>
        <end position="117"/>
    </location>
</feature>
<feature type="lipid moiety-binding region" description="Phosphatidylethanolamine amidated glycine" evidence="1">
    <location>
        <position position="116"/>
    </location>
</feature>
<protein>
    <recommendedName>
        <fullName>Autophagy-related protein 8</fullName>
    </recommendedName>
    <alternativeName>
        <fullName>Autophagy-related ubiquitin-like modifier atg8</fullName>
    </alternativeName>
</protein>
<reference key="1">
    <citation type="journal article" date="2011" name="PLoS Genet.">
        <title>Genomic analysis of the necrotrophic fungal pathogens Sclerotinia sclerotiorum and Botrytis cinerea.</title>
        <authorList>
            <person name="Amselem J."/>
            <person name="Cuomo C.A."/>
            <person name="van Kan J.A.L."/>
            <person name="Viaud M."/>
            <person name="Benito E.P."/>
            <person name="Couloux A."/>
            <person name="Coutinho P.M."/>
            <person name="de Vries R.P."/>
            <person name="Dyer P.S."/>
            <person name="Fillinger S."/>
            <person name="Fournier E."/>
            <person name="Gout L."/>
            <person name="Hahn M."/>
            <person name="Kohn L."/>
            <person name="Lapalu N."/>
            <person name="Plummer K.M."/>
            <person name="Pradier J.-M."/>
            <person name="Quevillon E."/>
            <person name="Sharon A."/>
            <person name="Simon A."/>
            <person name="ten Have A."/>
            <person name="Tudzynski B."/>
            <person name="Tudzynski P."/>
            <person name="Wincker P."/>
            <person name="Andrew M."/>
            <person name="Anthouard V."/>
            <person name="Beever R.E."/>
            <person name="Beffa R."/>
            <person name="Benoit I."/>
            <person name="Bouzid O."/>
            <person name="Brault B."/>
            <person name="Chen Z."/>
            <person name="Choquer M."/>
            <person name="Collemare J."/>
            <person name="Cotton P."/>
            <person name="Danchin E.G."/>
            <person name="Da Silva C."/>
            <person name="Gautier A."/>
            <person name="Giraud C."/>
            <person name="Giraud T."/>
            <person name="Gonzalez C."/>
            <person name="Grossetete S."/>
            <person name="Gueldener U."/>
            <person name="Henrissat B."/>
            <person name="Howlett B.J."/>
            <person name="Kodira C."/>
            <person name="Kretschmer M."/>
            <person name="Lappartient A."/>
            <person name="Leroch M."/>
            <person name="Levis C."/>
            <person name="Mauceli E."/>
            <person name="Neuveglise C."/>
            <person name="Oeser B."/>
            <person name="Pearson M."/>
            <person name="Poulain J."/>
            <person name="Poussereau N."/>
            <person name="Quesneville H."/>
            <person name="Rascle C."/>
            <person name="Schumacher J."/>
            <person name="Segurens B."/>
            <person name="Sexton A."/>
            <person name="Silva E."/>
            <person name="Sirven C."/>
            <person name="Soanes D.M."/>
            <person name="Talbot N.J."/>
            <person name="Templeton M."/>
            <person name="Yandava C."/>
            <person name="Yarden O."/>
            <person name="Zeng Q."/>
            <person name="Rollins J.A."/>
            <person name="Lebrun M.-H."/>
            <person name="Dickman M."/>
        </authorList>
    </citation>
    <scope>NUCLEOTIDE SEQUENCE [LARGE SCALE GENOMIC DNA]</scope>
    <source>
        <strain>ATCC 18683 / 1980 / Ss-1</strain>
    </source>
</reference>
<sequence>MRSKFKDEHPFEKRKAEAERIRQKYSDRIPVICEKVEKSDIATIDKKKYLVPSDLTVGQFVYVIRKRIKLSPEKAIFIFVDEVLPPTAALMSSIYEEHKDEDGFLYISYSGENTFGEALEEAN</sequence>